<evidence type="ECO:0000255" key="1">
    <source>
        <dbReference type="PROSITE-ProRule" id="PRU01210"/>
    </source>
</evidence>
<evidence type="ECO:0000269" key="2">
    <source>
    </source>
</evidence>
<evidence type="ECO:0000269" key="3">
    <source>
    </source>
</evidence>
<evidence type="ECO:0000269" key="4">
    <source>
    </source>
</evidence>
<evidence type="ECO:0000269" key="5">
    <source>
    </source>
</evidence>
<evidence type="ECO:0000269" key="6">
    <source>
    </source>
</evidence>
<evidence type="ECO:0000269" key="7">
    <source>
    </source>
</evidence>
<evidence type="ECO:0000269" key="8">
    <source>
    </source>
</evidence>
<evidence type="ECO:0000269" key="9">
    <source>
    </source>
</evidence>
<evidence type="ECO:0000269" key="10">
    <source>
    </source>
</evidence>
<evidence type="ECO:0000269" key="11">
    <source>
    </source>
</evidence>
<evidence type="ECO:0000269" key="12">
    <source>
    </source>
</evidence>
<evidence type="ECO:0000269" key="13">
    <source>
    </source>
</evidence>
<evidence type="ECO:0000269" key="14">
    <source>
    </source>
</evidence>
<evidence type="ECO:0000269" key="15">
    <source>
    </source>
</evidence>
<evidence type="ECO:0000269" key="16">
    <source>
    </source>
</evidence>
<evidence type="ECO:0000269" key="17">
    <source>
    </source>
</evidence>
<evidence type="ECO:0000269" key="18">
    <source>
    </source>
</evidence>
<evidence type="ECO:0000269" key="19">
    <source>
    </source>
</evidence>
<evidence type="ECO:0000269" key="20">
    <source>
    </source>
</evidence>
<evidence type="ECO:0000269" key="21">
    <source>
    </source>
</evidence>
<evidence type="ECO:0000269" key="22">
    <source>
    </source>
</evidence>
<evidence type="ECO:0000269" key="23">
    <source>
    </source>
</evidence>
<evidence type="ECO:0000269" key="24">
    <source>
    </source>
</evidence>
<evidence type="ECO:0000269" key="25">
    <source>
    </source>
</evidence>
<evidence type="ECO:0000269" key="26">
    <source ref="7"/>
</evidence>
<evidence type="ECO:0000303" key="27">
    <source>
    </source>
</evidence>
<evidence type="ECO:0000303" key="28">
    <source>
    </source>
</evidence>
<evidence type="ECO:0000303" key="29">
    <source>
    </source>
</evidence>
<evidence type="ECO:0000303" key="30">
    <source>
    </source>
</evidence>
<evidence type="ECO:0000303" key="31">
    <source>
    </source>
</evidence>
<evidence type="ECO:0000303" key="32">
    <source>
    </source>
</evidence>
<evidence type="ECO:0000303" key="33">
    <source>
    </source>
</evidence>
<evidence type="ECO:0000303" key="34">
    <source>
    </source>
</evidence>
<evidence type="ECO:0000303" key="35">
    <source>
    </source>
</evidence>
<evidence type="ECO:0000303" key="36">
    <source>
    </source>
</evidence>
<evidence type="ECO:0000303" key="37">
    <source>
    </source>
</evidence>
<evidence type="ECO:0000303" key="38">
    <source>
    </source>
</evidence>
<evidence type="ECO:0000303" key="39">
    <source>
    </source>
</evidence>
<evidence type="ECO:0000303" key="40">
    <source>
    </source>
</evidence>
<evidence type="ECO:0000303" key="41">
    <source ref="7"/>
</evidence>
<evidence type="ECO:0000305" key="42"/>
<evidence type="ECO:0000305" key="43">
    <source>
    </source>
</evidence>
<evidence type="ECO:0000305" key="44">
    <source>
    </source>
</evidence>
<evidence type="ECO:0000305" key="45">
    <source>
    </source>
</evidence>
<evidence type="ECO:0000312" key="46">
    <source>
        <dbReference type="EMBL" id="AAB29128.1"/>
    </source>
</evidence>
<evidence type="ECO:0000312" key="47">
    <source>
        <dbReference type="EMBL" id="CAA46982.1"/>
    </source>
</evidence>
<evidence type="ECO:0000312" key="48">
    <source>
        <dbReference type="EMBL" id="QPD99041.1"/>
    </source>
</evidence>
<evidence type="ECO:0007744" key="49">
    <source>
        <dbReference type="PDB" id="1B7D"/>
    </source>
</evidence>
<evidence type="ECO:0007744" key="50">
    <source>
        <dbReference type="PDB" id="1NPI"/>
    </source>
</evidence>
<evidence type="ECO:0007829" key="51">
    <source>
        <dbReference type="PDB" id="1B7D"/>
    </source>
</evidence>
<evidence type="ECO:0007829" key="52">
    <source>
        <dbReference type="PDB" id="1NPI"/>
    </source>
</evidence>
<accession>P15226</accession>
<accession>A0A7S8RFZ4</accession>
<reference evidence="47" key="1">
    <citation type="journal article" date="1992" name="FEBS Lett.">
        <title>Molecular cloning and nucleotide sequence analysis of a cDNA encoding the main beta-neurotoxin from the venom of the South American scorpion Tityus serrulatus.</title>
        <authorList>
            <person name="Martin-Eauclaire M.-F."/>
            <person name="Ceard B."/>
            <person name="Ribeiro A.M."/>
            <person name="Diniz C.R."/>
            <person name="Rochat H."/>
            <person name="Bougis P.E."/>
        </authorList>
    </citation>
    <scope>NUCLEOTIDE SEQUENCE [MRNA]</scope>
    <source>
        <tissue>Venom gland</tissue>
    </source>
</reference>
<reference evidence="46" key="2">
    <citation type="journal article" date="1993" name="FEBS Lett.">
        <title>The genomic region encoding toxin gamma from the scorpion Tityus serrulatus contains an intron.</title>
        <authorList>
            <person name="Becerril B."/>
            <person name="Corona M."/>
            <person name="Mejia M.C."/>
            <person name="Martin B.M."/>
            <person name="Lucas S."/>
            <person name="Bolivar F."/>
            <person name="Possani L.D."/>
        </authorList>
    </citation>
    <scope>NUCLEOTIDE SEQUENCE [GENOMIC DNA]</scope>
</reference>
<reference evidence="48" key="3">
    <citation type="journal article" date="2021" name="Toxicon">
        <title>Novel components of Tityus serrulatus venom: a transcriptomic approach.</title>
        <authorList>
            <person name="Kalapothakis Y."/>
            <person name="Miranda K."/>
            <person name="Pereira A.H."/>
            <person name="Witt A.S.A."/>
            <person name="Marani C."/>
            <person name="Martins A.P."/>
            <person name="Leal H.G."/>
            <person name="Campos-Junior E."/>
            <person name="Pimenta A.M.C."/>
            <person name="Borges A."/>
            <person name="Chavez-Olortegui C."/>
            <person name="Kalapothakis E."/>
        </authorList>
    </citation>
    <scope>NUCLEOTIDE SEQUENCE [MRNA]</scope>
    <source>
        <tissue>Telson</tissue>
    </source>
</reference>
<reference key="4">
    <citation type="journal article" date="1984" name="Biochem. Biophys. Res. Commun.">
        <title>Amino acid sequence of toxin VII, a beta-toxin from the venom of the scorpion Tityus serrulatus.</title>
        <authorList>
            <person name="Bechis G."/>
            <person name="Sampieri F."/>
            <person name="Yuan P.-M."/>
            <person name="Brando T."/>
            <person name="Martin M.-F."/>
            <person name="Diniz C.R."/>
            <person name="Rochat H."/>
        </authorList>
    </citation>
    <scope>PROTEIN SEQUENCE OF 21-81</scope>
    <scope>AMIDATION AT CYS-81</scope>
    <scope>SUBCELLULAR LOCATION</scope>
    <source>
        <tissue>Venom</tissue>
    </source>
</reference>
<reference key="5">
    <citation type="journal article" date="1985" name="Biochem. J.">
        <title>Scorpion toxins from Centruroides noxius and Tityus serrulatus. Primary structures and sequence comparison by metric analysis.</title>
        <authorList>
            <person name="Possani L.D."/>
            <person name="Martin B.M."/>
            <person name="Svendsen I."/>
            <person name="Rode G.S."/>
            <person name="Erickson B.W."/>
        </authorList>
    </citation>
    <scope>PROTEIN SEQUENCE OF 21-81</scope>
    <scope>SUBCELLULAR LOCATION</scope>
    <scope>MUTAGENESIS OF 1-LYS--MET-6</scope>
    <source>
        <tissue>Venom</tissue>
    </source>
</reference>
<reference key="6">
    <citation type="journal article" date="1991" name="J. Biol. Chem.">
        <title>Discharge effect on pancreatic exocrine secretion produced by toxins purified from Tityus serrulatus scorpion venom.</title>
        <authorList>
            <person name="Possani L.D."/>
            <person name="Martin B.M."/>
            <person name="Fletcher M.D."/>
            <person name="Fletcher P.L. Jr."/>
        </authorList>
    </citation>
    <scope>PROTEIN SEQUENCE OF 21-81</scope>
    <scope>FUNCTION</scope>
    <scope>SUBCELLULAR LOCATION</scope>
    <source>
        <tissue>Venom</tissue>
    </source>
</reference>
<reference key="7">
    <citation type="journal article" date="1981" name="Carlsberg Res. Commun.">
        <title>Purification and chemical characterization of the major toxins from the venom of the Brazilian scorpion Titus serrulatus Lutz and Mello.</title>
        <authorList>
            <person name="Possani L.D."/>
            <person name="Martin B.M."/>
            <person name="Mochca-Morales J."/>
            <person name="Svendsen I."/>
        </authorList>
    </citation>
    <scope>PROTEIN SEQUENCE OF 21-62</scope>
    <scope>SUBCELLULAR LOCATION</scope>
    <source>
        <tissue>Venom</tissue>
    </source>
</reference>
<reference key="8">
    <citation type="journal article" date="1991" name="Toxicon">
        <title>Further characterization of toxins T1IV (TsTX-III) and T2IV from Tityus serrulatus scorpion venom.</title>
        <authorList>
            <person name="Sampaio S.V."/>
            <person name="Arantes E.C."/>
            <person name="Prado W.A."/>
            <person name="Riccioppo Neto F."/>
            <person name="Giglio J.R."/>
        </authorList>
    </citation>
    <scope>PROTEIN SEQUENCE OF 21-46</scope>
    <scope>SUBCELLULAR LOCATION</scope>
    <source>
        <tissue>Venom</tissue>
    </source>
</reference>
<reference key="9">
    <citation type="journal article" date="2014" name="Toxicon">
        <title>Influence of post-starvation extraction time and prey-specific diet in Tityus serrulatus scorpion venom composition and hyaluronidase activity.</title>
        <authorList>
            <person name="Pucca M.B."/>
            <person name="Amorim F.G."/>
            <person name="Cerni F.A."/>
            <person name="Bordon K.C.F."/>
            <person name="Cardoso I.A."/>
            <person name="Anjolette F.A."/>
            <person name="Arantes E.C."/>
        </authorList>
    </citation>
    <scope>PROTEIN SEQUENCE OF 21-45</scope>
    <scope>SUBCELLULAR LOCATION</scope>
    <source>
        <tissue>Venom</tissue>
    </source>
</reference>
<reference key="10">
    <citation type="journal article" date="1987" name="Biochim. Biophys. Acta">
        <title>Raman and infrared spectra of toxin gamma from the venom of the scorpion Tityus serrulatus.</title>
        <authorList>
            <person name="Areas E.P.G."/>
            <person name="Giglio J.R."/>
            <person name="Arantes E.C."/>
            <person name="Kawanoa Y."/>
        </authorList>
    </citation>
    <scope>BIOPHYSICOCHEMICAL PROPERTIES</scope>
</reference>
<reference key="11">
    <citation type="journal article" date="1989" name="Toxicon">
        <title>A simplified procedure for the fractionation of Tityus serrulatus venom: isolation and partial characterization of TsTX-IV, a new neurotoxin.</title>
        <authorList>
            <person name="Arantes E.C."/>
            <person name="Prado W.A."/>
            <person name="Sampaio S.V."/>
            <person name="Giglio J.R."/>
        </authorList>
    </citation>
    <scope>AMINO ACID COMPOSITION</scope>
    <scope>TOXIC DOSE</scope>
    <source>
        <tissue>Venom</tissue>
    </source>
</reference>
<reference key="12">
    <citation type="journal article" date="1997" name="Circ. Res.">
        <title>Effects of Tityus serrulatus scorpion toxin gamma on voltage-gated Na+ channels.</title>
        <authorList>
            <person name="Marcotte P."/>
            <person name="Chen L.Q."/>
            <person name="Kallen R.G."/>
            <person name="Chahine M."/>
        </authorList>
    </citation>
    <scope>FUNCTION</scope>
</reference>
<reference key="13">
    <citation type="journal article" date="1998" name="Am. J. Physiol.">
        <title>Synergism between toxin-gamma from Brazilian scorpion Tityus serrulatus and veratridine in chromaffin cells.</title>
        <authorList>
            <person name="Conceicao I.M."/>
            <person name="Lebrun I."/>
            <person name="Cano-Abad M."/>
            <person name="Gandia L."/>
            <person name="Hernandez-Guijo J.M."/>
            <person name="Lopez M.G."/>
            <person name="Villarroya M."/>
            <person name="Jurkiewicz A."/>
            <person name="Garcia A.G."/>
        </authorList>
    </citation>
    <scope>FUNCTION</scope>
</reference>
<reference key="14">
    <citation type="journal article" date="1999" name="Braz. J. Med. Biol. Res.">
        <title>Effect of toxin-g from Tityus serrulatus scorpion venom on gastric emptying in rats.</title>
        <authorList>
            <person name="Bucaretchi F."/>
            <person name="Vinagre A.M."/>
            <person name="Chavez-Olortegui C."/>
            <person name="Collares E.F."/>
        </authorList>
    </citation>
    <scope>FUNCTION</scope>
</reference>
<reference key="15">
    <citation type="journal article" date="1999" name="Eur. J. Biochem.">
        <title>Role of lysine and tryptophan residues in the biological activity of toxin VII (Ts gamma) from the scorpion Tityus serrulatus.</title>
        <authorList>
            <person name="Hassani O."/>
            <person name="Mansuelle P."/>
            <person name="Cestele S."/>
            <person name="Bourdeaux M."/>
            <person name="Rochat H."/>
            <person name="Sampieri F."/>
        </authorList>
    </citation>
    <scope>SITES LYS-32; TRP-59 AND TRP-74</scope>
</reference>
<reference key="16">
    <citation type="journal article" date="2007" name="J. Gen. Physiol.">
        <title>Beta-scorpion toxin modifies gating transitions in all four voltage sensors of the sodium channel.</title>
        <authorList>
            <person name="Campos F.V."/>
            <person name="Chanda B."/>
            <person name="Beirao P.S."/>
            <person name="Bezanilla F."/>
        </authorList>
    </citation>
    <scope>FUNCTION</scope>
</reference>
<reference key="17">
    <citation type="journal article" date="2007" name="Toxicol. Appl. Pharmacol.">
        <title>Differential effects of five 'classical' scorpion beta-toxins on rNav1.2a and DmNav1 provide clues on species-selectivity.</title>
        <authorList>
            <person name="Bosmans F."/>
            <person name="Martin-Eauclaire M.F."/>
            <person name="Tytgat J."/>
        </authorList>
    </citation>
    <scope>FUNCTION</scope>
</reference>
<reference key="18">
    <citation type="journal article" date="2008" name="Nature">
        <title>Deconstructing voltage sensor function and pharmacology in sodium channels.</title>
        <authorList>
            <person name="Bosmans F."/>
            <person name="Martin-Eauclaire M.F."/>
            <person name="Swartz K.J."/>
        </authorList>
    </citation>
    <scope>FUNCTION</scope>
</reference>
<reference key="19">
    <citation type="journal article" date="2011" name="J. Gen. Physiol.">
        <title>Functional properties and toxin pharmacology of a dorsal root ganglion sodium channel viewed through its voltage sensors.</title>
        <authorList>
            <person name="Bosmans F."/>
            <person name="Puopolo M."/>
            <person name="Martin-Eauclaire M.F."/>
            <person name="Bean B.P."/>
            <person name="Swartz K.J."/>
        </authorList>
    </citation>
    <scope>FUNCTION ON NAV1.9/SCN11A</scope>
</reference>
<reference key="20">
    <citation type="journal article" date="2011" name="Toxicon">
        <title>Tityus serrulatus venom and toxins Ts1, Ts2 and Ts6 induce macrophage activation and production of immune mediators.</title>
        <authorList>
            <person name="Zoccal K.F."/>
            <person name="Bitencourt C.S."/>
            <person name="Secatto A."/>
            <person name="Sorgi C.A."/>
            <person name="Bordon K.C."/>
            <person name="Sampaio S.V."/>
            <person name="Arantes E.C."/>
            <person name="Faccioli L.H."/>
        </authorList>
    </citation>
    <scope>FUNCTION</scope>
</reference>
<reference key="21">
    <citation type="journal article" date="2014" name="Angew. Chem. Int. Ed.">
        <title>Total chemical synthesis of biologically active fluorescent dye-labeled Ts1 toxin.</title>
        <authorList>
            <person name="Dang B."/>
            <person name="Kubota T."/>
            <person name="Correa A.M."/>
            <person name="Bezanilla F."/>
            <person name="Kent S.B."/>
        </authorList>
    </citation>
    <scope>FUNCTION</scope>
    <scope>SYNTHESIS OF 21-81 (BOTH AMIDATED AND NON-AMIDATED FORMS)</scope>
</reference>
<reference key="22">
    <citation type="journal article" date="2014" name="Toxicon">
        <title>Functional and structural study comparing the C-terminal amidated beta-neurotoxin Ts1 with its isoform Ts1-G isolated from Tityus serrulatus venom.</title>
        <authorList>
            <person name="Coelho V.A."/>
            <person name="Cremonez C.M."/>
            <person name="Anjolette F.A."/>
            <person name="Aguiar J.F."/>
            <person name="Varanda W.A."/>
            <person name="Arantes E.C."/>
        </authorList>
    </citation>
    <scope>MUTAGENESIS OF CYS-81</scope>
    <scope>MASS SPECTROMETRY</scope>
</reference>
<reference key="23">
    <citation type="journal article" date="2015" name="J. Gen. Physiol.">
        <title>A surface plasmon resonance approach to monitor toxin interactions with an isolated voltage-gated sodium channel paddle motif.</title>
        <authorList>
            <person name="Martin-Eauclaire M.F."/>
            <person name="Ferracci G."/>
            <person name="Bosmans F."/>
            <person name="Bougis P.E."/>
        </authorList>
    </citation>
    <scope>FUNCTION</scope>
</reference>
<reference key="24">
    <citation type="journal article" date="2015" name="Neuropharmacology">
        <title>A gamut of undiscovered electrophysiological effects produced by Tityus serrulatus toxin 1 on NaV-type isoforms.</title>
        <authorList>
            <person name="Peigneur S."/>
            <person name="Cologna C.T."/>
            <person name="Cremonez C.M."/>
            <person name="Mille B.G."/>
            <person name="Pucca M.B."/>
            <person name="Cuypers E."/>
            <person name="Arantes E.C."/>
            <person name="Tytgat J."/>
        </authorList>
    </citation>
    <scope>FUNCTION</scope>
</reference>
<reference key="25">
    <citation type="journal article" date="2017" name="Front. Microbiol.">
        <title>Antifungal activity against filamentous fungi of Ts1, a multifunctional toxin from Tityus serrulatus scorpion venom.</title>
        <authorList>
            <person name="Santussi W.M."/>
            <person name="Bordon K.C.F."/>
            <person name="Rodrigues Alves A.P.N."/>
            <person name="Cologna C.T."/>
            <person name="Said S."/>
            <person name="Arantes E.C."/>
        </authorList>
    </citation>
    <scope>FUNCTION</scope>
</reference>
<reference key="26">
    <citation type="journal article" date="2018" name="Toxicon">
        <title>Ts1 from the Brazilian scorpion Tityus serrulatus: a half-century of studies on a multifunctional beta like-toxin.</title>
        <authorList>
            <person name="Martin-Eauclaire M.F."/>
            <person name="Bougis P.E."/>
            <person name="de Lima M.E."/>
        </authorList>
    </citation>
    <scope>REVIEW</scope>
</reference>
<reference key="27">
    <citation type="journal article" date="2019" name="Dokl. Biochem. Biophys.">
        <title>Recombinant production and structure-function study of the Ts1 toxin from the Brazilian scorpion Tityus serrulatus.</title>
        <authorList>
            <person name="Shenkarev Z.O."/>
            <person name="Shulepko M.A."/>
            <person name="Peigneur S."/>
            <person name="Myshkin M.Y."/>
            <person name="Berkut A.A."/>
            <person name="Vassilevski A.A."/>
            <person name="Tytgat J."/>
            <person name="Lyukmanova E.N."/>
            <person name="Kirpichnikov M.P."/>
        </authorList>
    </citation>
    <scope>FUNCTION</scope>
    <scope>RECOMBINANT EXPRESSION</scope>
</reference>
<reference key="28">
    <citation type="journal article" date="1999" name="J. Mol. Biol.">
        <title>Crystal structure of neurotoxin Ts1 from Tityus serrulatus provides insights into the specificity and toxicity of scorpion toxins.</title>
        <authorList>
            <person name="Polikarpov I."/>
            <person name="Junior M.S.M."/>
            <person name="Marangoni S."/>
            <person name="Toyama M.H."/>
            <person name="Teplyakov A."/>
        </authorList>
    </citation>
    <scope>X-RAY CRYSTALLOGRAPHY (1.73 ANGSTROMS) OF 21-81</scope>
    <scope>DISULFIDE BOND</scope>
</reference>
<reference key="29">
    <citation type="journal article" date="2003" name="Acta Crystallogr. D">
        <title>Structural analysis of Tityus serrulatus Ts1 neurotoxin at atomic resolution: insights into interactions with Na+ channels.</title>
        <authorList>
            <person name="Pinheiro C.B."/>
            <person name="Marangoni S."/>
            <person name="Toyama M.H."/>
            <person name="Polikarpov I."/>
        </authorList>
    </citation>
    <scope>X-RAY CRYSTALLOGRAPHY (1.16 ANGSTROMS) OF 21-81</scope>
    <scope>DISULFIDE BONDS</scope>
</reference>
<reference key="30">
    <citation type="journal article" date="2009" name="Protein Pept. Lett.">
        <title>Tityus serrulatus scorpion venom and toxins: an overview.</title>
        <authorList>
            <person name="Cologna C.T."/>
            <person name="Marcussi S."/>
            <person name="Giglio J.R."/>
            <person name="Soares A.M."/>
            <person name="Arantes E.C."/>
        </authorList>
    </citation>
    <scope>NOMENCLATURE</scope>
</reference>
<reference key="31">
    <citation type="journal article" date="2012" name="PLoS ONE">
        <title>Identification and phylogenetic analysis of Tityus pachyurus and Tityus obscurus novel putative Na+-channel scorpion toxins.</title>
        <authorList>
            <person name="Guerrero-Vargas J.A."/>
            <person name="Mourao C.B."/>
            <person name="Quintero-Hernandez V."/>
            <person name="Possani L.D."/>
            <person name="Schwartz E.F."/>
        </authorList>
    </citation>
    <scope>NOMENCLATURE</scope>
</reference>
<name>SCX1_TITSE</name>
<proteinExistence type="evidence at protein level"/>
<comment type="function">
    <text evidence="3 6 7 8 10 11 12 14 16 17 19 20 24 25 42 45">Voltage-gated sodium channels (Nav) gating-modifier. Acts both as alpha- and beta-toxin, since it affects not only activation but also inactivation of Nav channels (Probable) (PubMed:25862296). Binds to Nav domain DII and impairs the four Nav channel voltage sensors movements (PubMed:17698594, PubMed:19005548). Depending on Nav channel subtypes tested, can also bind Nav domains DIII (low affinity) and DIV (very low affinity) (PubMed:17698594, PubMed:19005548, PubMed:25624450). Acts on almost all the Nav channels tested (mammalian Nav1.2/SCN2A, Nav1.3/SCN3A, Nav1.4/SCN4A, Nav1.5/SCN5A, Nav1.6/SCN8A, Nav1.9/SCN11A, and insect DmNav1) (PubMed:17698594, PubMed:21670206, PubMed:24989851, PubMed:25862296, PubMed:31012002, PubMed:9048656). Is highly active against both mammals and insects (PubMed:17118417, PubMed:21549737). Irreversibly modulates DmNav channels (PubMed:25862296). Other Ts1 activities have been studied, such as immunomodulation, antimicrobial activity or exocrine secretion (Probable). This toxin exhibits an antifungal activity against filamentous fungi (PubMed:28634472). In vitro, it has an important immunomodulatory effect on macrophages by stimulating the release of pro-inflammatory cytokines (PubMed:21549737). It also shows an activity in exocrine secretion in pancreas, stomach and adrenal gland (PubMed:10347806, PubMed:1993690, PubMed:9611141).</text>
</comment>
<comment type="biophysicochemical properties">
    <phDependence>
        <text evidence="21">Optimum pH is 4.5-7.5. Is almost completely inactivated at pH 11.5.</text>
    </phDependence>
    <temperatureDependence>
        <text evidence="21">Optimum temperature is 25-60 degrees Celsius. All temperatures tested are optimal.</text>
    </temperatureDependence>
</comment>
<comment type="subcellular location">
    <subcellularLocation>
        <location evidence="9 10 15 22 23 26">Secreted</location>
    </subcellularLocation>
</comment>
<comment type="tissue specificity">
    <text evidence="44">Expressed by the venom gland.</text>
</comment>
<comment type="domain">
    <text evidence="42">Has the structural arrangement of an alpha-helix connected to antiparallel beta-sheets by disulfide bonds (CS-alpha/beta).</text>
</comment>
<comment type="PTM">
    <text evidence="13 14">C-terminal amidation is important for high activity.</text>
</comment>
<comment type="mass spectrometry" mass="6879.4" method="MALDI" evidence="13"/>
<comment type="toxic dose">
    <text evidence="45">LD(50) is 4.7 ug by subcutaneous injection into mice (235 ug/kg).</text>
</comment>
<comment type="toxic dose">
    <text evidence="18">LD(50) is 826 +/- 156 ug/kg by intravenous injection into mice.</text>
</comment>
<comment type="toxic dose">
    <text evidence="18">LD(50) is 11 +/- 9 ug/kg by intracistenal injection into mice.</text>
</comment>
<comment type="toxic dose">
    <text evidence="18 45">LD(50) is 0.6 ng by intracerebroventricular injection into mice (30 ng/kg).</text>
</comment>
<comment type="toxic dose">
    <text evidence="2">LD(50) is 1.7 ng by intracerebroventricular injection into mice (85 ng/kg).</text>
</comment>
<comment type="miscellaneous">
    <text>Is the main neurotoxin of the venom of T.serrulatus.</text>
</comment>
<comment type="miscellaneous">
    <text evidence="12 17 45">Negative results: does not show activity on Nav1.1/SCN1A, Nav1.7/SCN9A, Nav1.8/SCN10A and the bacterial NaChBac.</text>
</comment>
<comment type="similarity">
    <text evidence="42">Belongs to the long (4 C-C) scorpion toxin superfamily. Sodium channel inhibitor family.</text>
</comment>
<comment type="caution">
    <text evidence="43">The 'mutant' Ts1-G was isolated from the venom before the last step maturation (i.e. amidation) thanks to a right purification technique (PubMed:24560880). It is indicated here as a mutant, since it does not correspond to the mature toxin.</text>
</comment>
<keyword id="KW-0002">3D-structure</keyword>
<keyword id="KW-0027">Amidation</keyword>
<keyword id="KW-0929">Antimicrobial</keyword>
<keyword id="KW-0903">Direct protein sequencing</keyword>
<keyword id="KW-1015">Disulfide bond</keyword>
<keyword id="KW-0295">Fungicide</keyword>
<keyword id="KW-0872">Ion channel impairing toxin</keyword>
<keyword id="KW-0528">Neurotoxin</keyword>
<keyword id="KW-0964">Secreted</keyword>
<keyword id="KW-0732">Signal</keyword>
<keyword id="KW-0800">Toxin</keyword>
<keyword id="KW-0738">Voltage-gated sodium channel impairing toxin</keyword>
<protein>
    <recommendedName>
        <fullName evidence="30 34 35">Beta-mammal/insect toxin Ts1</fullName>
    </recommendedName>
    <alternativeName>
        <fullName>Beta-like toxin Ts1</fullName>
    </alternativeName>
    <alternativeName>
        <fullName evidence="33">PT-Mice-Ins-beta NaTx6.1</fullName>
    </alternativeName>
    <alternativeName>
        <fullName evidence="30">Tityustoxin VII</fullName>
        <shortName evidence="28 30 37">Toxin VII</shortName>
        <shortName evidence="30 32 37">Ts VII</shortName>
        <shortName evidence="30">Ts7</shortName>
        <shortName evidence="30 37">TsTX-VII</shortName>
    </alternativeName>
    <alternativeName>
        <fullName evidence="30 31">Toxin II-11</fullName>
    </alternativeName>
    <alternativeName>
        <fullName evidence="30">Toxin III-10</fullName>
    </alternativeName>
    <alternativeName>
        <fullName evidence="29 30">Toxin T2-IV</fullName>
    </alternativeName>
    <alternativeName>
        <fullName evidence="30 31 36 38 39 41">Toxin gamma</fullName>
        <shortName evidence="40">T-gamma</shortName>
        <shortName evidence="39">TiTx gamma</shortName>
        <shortName evidence="27">Toxin-g</shortName>
    </alternativeName>
    <alternativeName>
        <fullName evidence="30">TsTX-I</fullName>
    </alternativeName>
</protein>
<organism>
    <name type="scientific">Tityus serrulatus</name>
    <name type="common">Brazilian scorpion</name>
    <dbReference type="NCBI Taxonomy" id="6887"/>
    <lineage>
        <taxon>Eukaryota</taxon>
        <taxon>Metazoa</taxon>
        <taxon>Ecdysozoa</taxon>
        <taxon>Arthropoda</taxon>
        <taxon>Chelicerata</taxon>
        <taxon>Arachnida</taxon>
        <taxon>Scorpiones</taxon>
        <taxon>Buthida</taxon>
        <taxon>Buthoidea</taxon>
        <taxon>Buthidae</taxon>
        <taxon>Tityus</taxon>
    </lineage>
</organism>
<sequence length="84" mass="9382">MKGMILFISCLLLIGIVVECKEGYLMDHEGCKLSCFIRPSGYCGRECGIKKGSSGYCAWPACYCYGLPNWVKVWDRATNKCGKK</sequence>
<dbReference type="EMBL" id="X66256">
    <property type="protein sequence ID" value="CAA46982.1"/>
    <property type="molecule type" value="mRNA"/>
</dbReference>
<dbReference type="EMBL" id="S66941">
    <property type="protein sequence ID" value="AAB29128.1"/>
    <property type="molecule type" value="Genomic_DNA"/>
</dbReference>
<dbReference type="EMBL" id="MT450705">
    <property type="protein sequence ID" value="QPD99041.1"/>
    <property type="molecule type" value="mRNA"/>
</dbReference>
<dbReference type="PIR" id="S21158">
    <property type="entry name" value="S21158"/>
</dbReference>
<dbReference type="PDB" id="1B7D">
    <property type="method" value="X-ray"/>
    <property type="resolution" value="1.73 A"/>
    <property type="chains" value="A=21-81"/>
</dbReference>
<dbReference type="PDB" id="1NPI">
    <property type="method" value="X-ray"/>
    <property type="resolution" value="1.16 A"/>
    <property type="chains" value="A=21-81"/>
</dbReference>
<dbReference type="PDBsum" id="1B7D"/>
<dbReference type="PDBsum" id="1NPI"/>
<dbReference type="SMR" id="P15226"/>
<dbReference type="ABCD" id="P15226">
    <property type="antibodies" value="1 sequenced antibody"/>
</dbReference>
<dbReference type="EvolutionaryTrace" id="P15226"/>
<dbReference type="GO" id="GO:0005576">
    <property type="term" value="C:extracellular region"/>
    <property type="evidence" value="ECO:0007669"/>
    <property type="project" value="UniProtKB-SubCell"/>
</dbReference>
<dbReference type="GO" id="GO:0019871">
    <property type="term" value="F:sodium channel inhibitor activity"/>
    <property type="evidence" value="ECO:0007669"/>
    <property type="project" value="InterPro"/>
</dbReference>
<dbReference type="GO" id="GO:0090729">
    <property type="term" value="F:toxin activity"/>
    <property type="evidence" value="ECO:0007669"/>
    <property type="project" value="UniProtKB-KW"/>
</dbReference>
<dbReference type="GO" id="GO:0050832">
    <property type="term" value="P:defense response to fungus"/>
    <property type="evidence" value="ECO:0007669"/>
    <property type="project" value="UniProtKB-KW"/>
</dbReference>
<dbReference type="GO" id="GO:0031640">
    <property type="term" value="P:killing of cells of another organism"/>
    <property type="evidence" value="ECO:0007669"/>
    <property type="project" value="UniProtKB-KW"/>
</dbReference>
<dbReference type="CDD" id="cd23106">
    <property type="entry name" value="neurotoxins_LC_scorpion"/>
    <property type="match status" value="1"/>
</dbReference>
<dbReference type="FunFam" id="3.30.30.10:FF:000002">
    <property type="entry name" value="Alpha-like toxin BmK-M1"/>
    <property type="match status" value="1"/>
</dbReference>
<dbReference type="Gene3D" id="3.30.30.10">
    <property type="entry name" value="Knottin, scorpion toxin-like"/>
    <property type="match status" value="1"/>
</dbReference>
<dbReference type="InterPro" id="IPR044062">
    <property type="entry name" value="LCN-type_CS_alpha_beta_dom"/>
</dbReference>
<dbReference type="InterPro" id="IPR003614">
    <property type="entry name" value="Scorpion_toxin-like"/>
</dbReference>
<dbReference type="InterPro" id="IPR036574">
    <property type="entry name" value="Scorpion_toxin-like_sf"/>
</dbReference>
<dbReference type="InterPro" id="IPR018218">
    <property type="entry name" value="Scorpion_toxinL"/>
</dbReference>
<dbReference type="InterPro" id="IPR002061">
    <property type="entry name" value="Scorpion_toxinL/defensin"/>
</dbReference>
<dbReference type="Pfam" id="PF00537">
    <property type="entry name" value="Toxin_3"/>
    <property type="match status" value="1"/>
</dbReference>
<dbReference type="PRINTS" id="PR00285">
    <property type="entry name" value="SCORPNTOXIN"/>
</dbReference>
<dbReference type="SMART" id="SM00505">
    <property type="entry name" value="Knot1"/>
    <property type="match status" value="1"/>
</dbReference>
<dbReference type="SUPFAM" id="SSF57095">
    <property type="entry name" value="Scorpion toxin-like"/>
    <property type="match status" value="1"/>
</dbReference>
<dbReference type="PROSITE" id="PS51863">
    <property type="entry name" value="LCN_CSAB"/>
    <property type="match status" value="1"/>
</dbReference>
<feature type="signal peptide" evidence="9 10 15 23 26">
    <location>
        <begin position="1"/>
        <end position="20"/>
    </location>
</feature>
<feature type="chain" id="PRO_0000035305" description="Beta-mammal/insect toxin Ts1" evidence="10 23">
    <location>
        <begin position="21"/>
        <end position="81"/>
    </location>
</feature>
<feature type="domain" description="LCN-type CS-alpha/beta" evidence="1">
    <location>
        <begin position="21"/>
        <end position="82"/>
    </location>
</feature>
<feature type="site" description="Important for activity" evidence="2">
    <location>
        <position position="32"/>
    </location>
</feature>
<feature type="site" description="Important for activity" evidence="2">
    <location>
        <position position="59"/>
    </location>
</feature>
<feature type="site" description="Important for activity" evidence="2">
    <location>
        <position position="74"/>
    </location>
</feature>
<feature type="modified residue" description="Cysteine amide" evidence="23">
    <location>
        <position position="81"/>
    </location>
</feature>
<feature type="disulfide bond" evidence="4 5 49 50">
    <location>
        <begin position="31"/>
        <end position="81"/>
    </location>
</feature>
<feature type="disulfide bond" evidence="4 5 49 50">
    <location>
        <begin position="35"/>
        <end position="57"/>
    </location>
</feature>
<feature type="disulfide bond" evidence="4 5 49 50">
    <location>
        <begin position="43"/>
        <end position="62"/>
    </location>
</feature>
<feature type="disulfide bond" evidence="4 5 49 50">
    <location>
        <begin position="47"/>
        <end position="64"/>
    </location>
</feature>
<feature type="mutagenesis site" description="Loss of toxicity to mice." evidence="22">
    <location>
        <begin position="21"/>
        <end position="26"/>
    </location>
</feature>
<feature type="mutagenesis site" description="Decrease of affinity of this non amidated toxin (Ts1-G) for sodium channel." evidence="13">
    <original>C</original>
    <variation>CG</variation>
    <location>
        <position position="81"/>
    </location>
</feature>
<feature type="helix" evidence="52">
    <location>
        <begin position="42"/>
        <end position="49"/>
    </location>
</feature>
<feature type="strand" evidence="52">
    <location>
        <begin position="53"/>
        <end position="58"/>
    </location>
</feature>
<feature type="strand" evidence="52">
    <location>
        <begin position="61"/>
        <end position="66"/>
    </location>
</feature>
<feature type="turn" evidence="51">
    <location>
        <begin position="76"/>
        <end position="78"/>
    </location>
</feature>